<proteinExistence type="evidence at transcript level"/>
<comment type="function">
    <text evidence="1">May induce apoptosis through the lysosomal-mitochondrial pathway. Translocates to the lysosome initiating the permeabilization of lysosomal membrane (LMP) and resulting in the release of CTSD and CTSL to the cytoplasm. Triggers the caspase-independent apoptosis by altering mitochondrial membrane permeabilization (MMP) resulting in the release of PDCD8 (By similarity).</text>
</comment>
<comment type="subcellular location">
    <subcellularLocation>
        <location evidence="5">Nucleus</location>
    </subcellularLocation>
    <subcellularLocation>
        <location evidence="5">Cytoplasm</location>
        <location evidence="5">Perinuclear region</location>
    </subcellularLocation>
    <subcellularLocation>
        <location evidence="5">Lysosome</location>
    </subcellularLocation>
    <text>Translocates to lysosome during apoptosis.</text>
</comment>
<comment type="tissue specificity">
    <text evidence="5">Widely expressed.</text>
</comment>
<comment type="domain">
    <text evidence="1">PH and FYVE-type zinc finger domains are required for lysosomal location.</text>
</comment>
<gene>
    <name type="primary">Plekhf1</name>
    <name type="synonym">Lapf</name>
</gene>
<sequence length="279" mass="31158">MVDHLANTEINSQRIAAVESCFGASGQPLALPGRVLLGEGVLTKECRKKAKPRIFFLFNDILVYGSIVLSKRKYRSQHIIPLEEVTLEPLPETLQAKNRWMIKTAKKSFVVSAASTTERQEWISHIEECVRRQLLATGRQPTTEHAAPWIPDKATDICMRCTQTRFSALTRRHHCRKCGFVVCAECSRERFLLPRLSPKPLRVCSLCYRELAAQKLREEAREGIGGSPPQLSHLGGTVCGASSGDDDDSDEDREGNGDGDWPTQVEFYASGVSWSAFHS</sequence>
<reference key="1">
    <citation type="journal article" date="2005" name="Science">
        <title>The transcriptional landscape of the mammalian genome.</title>
        <authorList>
            <person name="Carninci P."/>
            <person name="Kasukawa T."/>
            <person name="Katayama S."/>
            <person name="Gough J."/>
            <person name="Frith M.C."/>
            <person name="Maeda N."/>
            <person name="Oyama R."/>
            <person name="Ravasi T."/>
            <person name="Lenhard B."/>
            <person name="Wells C."/>
            <person name="Kodzius R."/>
            <person name="Shimokawa K."/>
            <person name="Bajic V.B."/>
            <person name="Brenner S.E."/>
            <person name="Batalov S."/>
            <person name="Forrest A.R."/>
            <person name="Zavolan M."/>
            <person name="Davis M.J."/>
            <person name="Wilming L.G."/>
            <person name="Aidinis V."/>
            <person name="Allen J.E."/>
            <person name="Ambesi-Impiombato A."/>
            <person name="Apweiler R."/>
            <person name="Aturaliya R.N."/>
            <person name="Bailey T.L."/>
            <person name="Bansal M."/>
            <person name="Baxter L."/>
            <person name="Beisel K.W."/>
            <person name="Bersano T."/>
            <person name="Bono H."/>
            <person name="Chalk A.M."/>
            <person name="Chiu K.P."/>
            <person name="Choudhary V."/>
            <person name="Christoffels A."/>
            <person name="Clutterbuck D.R."/>
            <person name="Crowe M.L."/>
            <person name="Dalla E."/>
            <person name="Dalrymple B.P."/>
            <person name="de Bono B."/>
            <person name="Della Gatta G."/>
            <person name="di Bernardo D."/>
            <person name="Down T."/>
            <person name="Engstrom P."/>
            <person name="Fagiolini M."/>
            <person name="Faulkner G."/>
            <person name="Fletcher C.F."/>
            <person name="Fukushima T."/>
            <person name="Furuno M."/>
            <person name="Futaki S."/>
            <person name="Gariboldi M."/>
            <person name="Georgii-Hemming P."/>
            <person name="Gingeras T.R."/>
            <person name="Gojobori T."/>
            <person name="Green R.E."/>
            <person name="Gustincich S."/>
            <person name="Harbers M."/>
            <person name="Hayashi Y."/>
            <person name="Hensch T.K."/>
            <person name="Hirokawa N."/>
            <person name="Hill D."/>
            <person name="Huminiecki L."/>
            <person name="Iacono M."/>
            <person name="Ikeo K."/>
            <person name="Iwama A."/>
            <person name="Ishikawa T."/>
            <person name="Jakt M."/>
            <person name="Kanapin A."/>
            <person name="Katoh M."/>
            <person name="Kawasawa Y."/>
            <person name="Kelso J."/>
            <person name="Kitamura H."/>
            <person name="Kitano H."/>
            <person name="Kollias G."/>
            <person name="Krishnan S.P."/>
            <person name="Kruger A."/>
            <person name="Kummerfeld S.K."/>
            <person name="Kurochkin I.V."/>
            <person name="Lareau L.F."/>
            <person name="Lazarevic D."/>
            <person name="Lipovich L."/>
            <person name="Liu J."/>
            <person name="Liuni S."/>
            <person name="McWilliam S."/>
            <person name="Madan Babu M."/>
            <person name="Madera M."/>
            <person name="Marchionni L."/>
            <person name="Matsuda H."/>
            <person name="Matsuzawa S."/>
            <person name="Miki H."/>
            <person name="Mignone F."/>
            <person name="Miyake S."/>
            <person name="Morris K."/>
            <person name="Mottagui-Tabar S."/>
            <person name="Mulder N."/>
            <person name="Nakano N."/>
            <person name="Nakauchi H."/>
            <person name="Ng P."/>
            <person name="Nilsson R."/>
            <person name="Nishiguchi S."/>
            <person name="Nishikawa S."/>
            <person name="Nori F."/>
            <person name="Ohara O."/>
            <person name="Okazaki Y."/>
            <person name="Orlando V."/>
            <person name="Pang K.C."/>
            <person name="Pavan W.J."/>
            <person name="Pavesi G."/>
            <person name="Pesole G."/>
            <person name="Petrovsky N."/>
            <person name="Piazza S."/>
            <person name="Reed J."/>
            <person name="Reid J.F."/>
            <person name="Ring B.Z."/>
            <person name="Ringwald M."/>
            <person name="Rost B."/>
            <person name="Ruan Y."/>
            <person name="Salzberg S.L."/>
            <person name="Sandelin A."/>
            <person name="Schneider C."/>
            <person name="Schoenbach C."/>
            <person name="Sekiguchi K."/>
            <person name="Semple C.A."/>
            <person name="Seno S."/>
            <person name="Sessa L."/>
            <person name="Sheng Y."/>
            <person name="Shibata Y."/>
            <person name="Shimada H."/>
            <person name="Shimada K."/>
            <person name="Silva D."/>
            <person name="Sinclair B."/>
            <person name="Sperling S."/>
            <person name="Stupka E."/>
            <person name="Sugiura K."/>
            <person name="Sultana R."/>
            <person name="Takenaka Y."/>
            <person name="Taki K."/>
            <person name="Tammoja K."/>
            <person name="Tan S.L."/>
            <person name="Tang S."/>
            <person name="Taylor M.S."/>
            <person name="Tegner J."/>
            <person name="Teichmann S.A."/>
            <person name="Ueda H.R."/>
            <person name="van Nimwegen E."/>
            <person name="Verardo R."/>
            <person name="Wei C.L."/>
            <person name="Yagi K."/>
            <person name="Yamanishi H."/>
            <person name="Zabarovsky E."/>
            <person name="Zhu S."/>
            <person name="Zimmer A."/>
            <person name="Hide W."/>
            <person name="Bult C."/>
            <person name="Grimmond S.M."/>
            <person name="Teasdale R.D."/>
            <person name="Liu E.T."/>
            <person name="Brusic V."/>
            <person name="Quackenbush J."/>
            <person name="Wahlestedt C."/>
            <person name="Mattick J.S."/>
            <person name="Hume D.A."/>
            <person name="Kai C."/>
            <person name="Sasaki D."/>
            <person name="Tomaru Y."/>
            <person name="Fukuda S."/>
            <person name="Kanamori-Katayama M."/>
            <person name="Suzuki M."/>
            <person name="Aoki J."/>
            <person name="Arakawa T."/>
            <person name="Iida J."/>
            <person name="Imamura K."/>
            <person name="Itoh M."/>
            <person name="Kato T."/>
            <person name="Kawaji H."/>
            <person name="Kawagashira N."/>
            <person name="Kawashima T."/>
            <person name="Kojima M."/>
            <person name="Kondo S."/>
            <person name="Konno H."/>
            <person name="Nakano K."/>
            <person name="Ninomiya N."/>
            <person name="Nishio T."/>
            <person name="Okada M."/>
            <person name="Plessy C."/>
            <person name="Shibata K."/>
            <person name="Shiraki T."/>
            <person name="Suzuki S."/>
            <person name="Tagami M."/>
            <person name="Waki K."/>
            <person name="Watahiki A."/>
            <person name="Okamura-Oho Y."/>
            <person name="Suzuki H."/>
            <person name="Kawai J."/>
            <person name="Hayashizaki Y."/>
        </authorList>
    </citation>
    <scope>NUCLEOTIDE SEQUENCE [LARGE SCALE MRNA]</scope>
    <source>
        <strain>C57BL/6J</strain>
        <tissue>Kidney</tissue>
    </source>
</reference>
<reference key="2">
    <citation type="journal article" date="2004" name="Genome Res.">
        <title>The status, quality, and expansion of the NIH full-length cDNA project: the Mammalian Gene Collection (MGC).</title>
        <authorList>
            <consortium name="The MGC Project Team"/>
        </authorList>
    </citation>
    <scope>NUCLEOTIDE SEQUENCE [LARGE SCALE MRNA]</scope>
    <source>
        <strain>Czech II</strain>
        <tissue>Mammary gland</tissue>
    </source>
</reference>
<reference key="3">
    <citation type="journal article" date="2005" name="J. Biol. Chem.">
        <title>The lysosome-associated apoptosis-inducing protein containing the pleckstrin homology (PH) and FYVE domains (LAPF), representative of a novel family of PH and FYVE domain-containing proteins, induces caspase-independent apoptosis via the lysosomal-mitochondrial pathway.</title>
        <authorList>
            <person name="Chen W."/>
            <person name="Li N."/>
            <person name="Chen T."/>
            <person name="Han Y."/>
            <person name="Li C."/>
            <person name="Wang Y."/>
            <person name="He W."/>
            <person name="Zhang L."/>
            <person name="Wan T."/>
            <person name="Cao X."/>
        </authorList>
    </citation>
    <scope>SUBCELLULAR LOCATION</scope>
    <scope>TISSUE SPECIFICITY</scope>
</reference>
<keyword id="KW-0053">Apoptosis</keyword>
<keyword id="KW-0963">Cytoplasm</keyword>
<keyword id="KW-0458">Lysosome</keyword>
<keyword id="KW-0479">Metal-binding</keyword>
<keyword id="KW-0539">Nucleus</keyword>
<keyword id="KW-1185">Reference proteome</keyword>
<keyword id="KW-0862">Zinc</keyword>
<keyword id="KW-0863">Zinc-finger</keyword>
<name>PKHF1_MOUSE</name>
<protein>
    <recommendedName>
        <fullName>Pleckstrin homology domain-containing family F member 1</fullName>
        <shortName>PH domain-containing family F member 1</shortName>
    </recommendedName>
    <alternativeName>
        <fullName>Lysosome-associated apoptosis-inducing protein containing PH and FYVE domains</fullName>
    </alternativeName>
</protein>
<evidence type="ECO:0000250" key="1"/>
<evidence type="ECO:0000255" key="2">
    <source>
        <dbReference type="PROSITE-ProRule" id="PRU00091"/>
    </source>
</evidence>
<evidence type="ECO:0000255" key="3">
    <source>
        <dbReference type="PROSITE-ProRule" id="PRU00145"/>
    </source>
</evidence>
<evidence type="ECO:0000256" key="4">
    <source>
        <dbReference type="SAM" id="MobiDB-lite"/>
    </source>
</evidence>
<evidence type="ECO:0000269" key="5">
    <source>
    </source>
</evidence>
<evidence type="ECO:0000305" key="6"/>
<accession>Q3TB82</accession>
<accession>Q99M16</accession>
<dbReference type="EMBL" id="AK143976">
    <property type="protein sequence ID" value="BAE25641.1"/>
    <property type="molecule type" value="mRNA"/>
</dbReference>
<dbReference type="EMBL" id="AK157990">
    <property type="protein sequence ID" value="BAE34303.1"/>
    <property type="molecule type" value="mRNA"/>
</dbReference>
<dbReference type="EMBL" id="AK170283">
    <property type="protein sequence ID" value="BAE41685.1"/>
    <property type="molecule type" value="mRNA"/>
</dbReference>
<dbReference type="EMBL" id="AK171398">
    <property type="protein sequence ID" value="BAE42432.1"/>
    <property type="molecule type" value="mRNA"/>
</dbReference>
<dbReference type="EMBL" id="BC002120">
    <property type="protein sequence ID" value="AAH02120.1"/>
    <property type="molecule type" value="mRNA"/>
</dbReference>
<dbReference type="CCDS" id="CCDS21158.1"/>
<dbReference type="RefSeq" id="NP_077724.2">
    <property type="nucleotide sequence ID" value="NM_024413.2"/>
</dbReference>
<dbReference type="RefSeq" id="XP_036009348.1">
    <property type="nucleotide sequence ID" value="XM_036153455.1"/>
</dbReference>
<dbReference type="SMR" id="Q3TB82"/>
<dbReference type="FunCoup" id="Q3TB82">
    <property type="interactions" value="133"/>
</dbReference>
<dbReference type="STRING" id="10090.ENSMUSP00000096113"/>
<dbReference type="iPTMnet" id="Q3TB82"/>
<dbReference type="PhosphoSitePlus" id="Q3TB82"/>
<dbReference type="SwissPalm" id="Q3TB82"/>
<dbReference type="PaxDb" id="10090-ENSMUSP00000096113"/>
<dbReference type="PeptideAtlas" id="Q3TB82"/>
<dbReference type="ProteomicsDB" id="289654"/>
<dbReference type="Pumba" id="Q3TB82"/>
<dbReference type="Antibodypedia" id="15545">
    <property type="antibodies" value="125 antibodies from 21 providers"/>
</dbReference>
<dbReference type="DNASU" id="72287"/>
<dbReference type="Ensembl" id="ENSMUST00000098513.6">
    <property type="protein sequence ID" value="ENSMUSP00000096113.5"/>
    <property type="gene ID" value="ENSMUSG00000074170.6"/>
</dbReference>
<dbReference type="GeneID" id="72287"/>
<dbReference type="KEGG" id="mmu:72287"/>
<dbReference type="UCSC" id="uc009gku.2">
    <property type="organism name" value="mouse"/>
</dbReference>
<dbReference type="AGR" id="MGI:1919537"/>
<dbReference type="CTD" id="79156"/>
<dbReference type="MGI" id="MGI:1919537">
    <property type="gene designation" value="Plekhf1"/>
</dbReference>
<dbReference type="VEuPathDB" id="HostDB:ENSMUSG00000074170"/>
<dbReference type="eggNOG" id="KOG1729">
    <property type="taxonomic scope" value="Eukaryota"/>
</dbReference>
<dbReference type="GeneTree" id="ENSGT00940000160728"/>
<dbReference type="HOGENOM" id="CLU_064864_2_0_1"/>
<dbReference type="InParanoid" id="Q3TB82"/>
<dbReference type="OMA" id="MRCTHTR"/>
<dbReference type="OrthoDB" id="70570at2759"/>
<dbReference type="PhylomeDB" id="Q3TB82"/>
<dbReference type="TreeFam" id="TF315235"/>
<dbReference type="BioGRID-ORCS" id="72287">
    <property type="hits" value="2 hits in 75 CRISPR screens"/>
</dbReference>
<dbReference type="ChiTaRS" id="Plekhf1">
    <property type="organism name" value="mouse"/>
</dbReference>
<dbReference type="PRO" id="PR:Q3TB82"/>
<dbReference type="Proteomes" id="UP000000589">
    <property type="component" value="Chromosome 7"/>
</dbReference>
<dbReference type="RNAct" id="Q3TB82">
    <property type="molecule type" value="protein"/>
</dbReference>
<dbReference type="Bgee" id="ENSMUSG00000074170">
    <property type="expression patterns" value="Expressed in small intestine Peyer's patch and 199 other cell types or tissues"/>
</dbReference>
<dbReference type="GO" id="GO:0005768">
    <property type="term" value="C:endosome"/>
    <property type="evidence" value="ECO:0007669"/>
    <property type="project" value="Ensembl"/>
</dbReference>
<dbReference type="GO" id="GO:0005764">
    <property type="term" value="C:lysosome"/>
    <property type="evidence" value="ECO:0007669"/>
    <property type="project" value="UniProtKB-SubCell"/>
</dbReference>
<dbReference type="GO" id="GO:0005634">
    <property type="term" value="C:nucleus"/>
    <property type="evidence" value="ECO:0007669"/>
    <property type="project" value="UniProtKB-SubCell"/>
</dbReference>
<dbReference type="GO" id="GO:0048471">
    <property type="term" value="C:perinuclear region of cytoplasm"/>
    <property type="evidence" value="ECO:0007669"/>
    <property type="project" value="UniProtKB-SubCell"/>
</dbReference>
<dbReference type="GO" id="GO:0032266">
    <property type="term" value="F:phosphatidylinositol-3-phosphate binding"/>
    <property type="evidence" value="ECO:0007669"/>
    <property type="project" value="Ensembl"/>
</dbReference>
<dbReference type="GO" id="GO:0070273">
    <property type="term" value="F:phosphatidylinositol-4-phosphate binding"/>
    <property type="evidence" value="ECO:0007669"/>
    <property type="project" value="Ensembl"/>
</dbReference>
<dbReference type="GO" id="GO:0010314">
    <property type="term" value="F:phosphatidylinositol-5-phosphate binding"/>
    <property type="evidence" value="ECO:0007669"/>
    <property type="project" value="Ensembl"/>
</dbReference>
<dbReference type="GO" id="GO:0008270">
    <property type="term" value="F:zinc ion binding"/>
    <property type="evidence" value="ECO:0007669"/>
    <property type="project" value="UniProtKB-KW"/>
</dbReference>
<dbReference type="GO" id="GO:0006915">
    <property type="term" value="P:apoptotic process"/>
    <property type="evidence" value="ECO:0007669"/>
    <property type="project" value="UniProtKB-KW"/>
</dbReference>
<dbReference type="GO" id="GO:0007032">
    <property type="term" value="P:endosome organization"/>
    <property type="evidence" value="ECO:0007669"/>
    <property type="project" value="Ensembl"/>
</dbReference>
<dbReference type="GO" id="GO:0010508">
    <property type="term" value="P:positive regulation of autophagy"/>
    <property type="evidence" value="ECO:0007669"/>
    <property type="project" value="Ensembl"/>
</dbReference>
<dbReference type="GO" id="GO:0072659">
    <property type="term" value="P:protein localization to plasma membrane"/>
    <property type="evidence" value="ECO:0007669"/>
    <property type="project" value="Ensembl"/>
</dbReference>
<dbReference type="CDD" id="cd15754">
    <property type="entry name" value="FYVE_PKHF1"/>
    <property type="match status" value="1"/>
</dbReference>
<dbReference type="CDD" id="cd01218">
    <property type="entry name" value="PH_Phafin2-like"/>
    <property type="match status" value="1"/>
</dbReference>
<dbReference type="FunFam" id="2.30.29.30:FF:000247">
    <property type="entry name" value="pleckstrin homology domain-containing family F member 1"/>
    <property type="match status" value="1"/>
</dbReference>
<dbReference type="FunFam" id="3.30.40.10:FF:000284">
    <property type="entry name" value="pleckstrin homology domain-containing family F member 1"/>
    <property type="match status" value="1"/>
</dbReference>
<dbReference type="Gene3D" id="2.30.29.30">
    <property type="entry name" value="Pleckstrin-homology domain (PH domain)/Phosphotyrosine-binding domain (PTB)"/>
    <property type="match status" value="1"/>
</dbReference>
<dbReference type="Gene3D" id="3.30.40.10">
    <property type="entry name" value="Zinc/RING finger domain, C3HC4 (zinc finger)"/>
    <property type="match status" value="1"/>
</dbReference>
<dbReference type="InterPro" id="IPR011993">
    <property type="entry name" value="PH-like_dom_sf"/>
</dbReference>
<dbReference type="InterPro" id="IPR001849">
    <property type="entry name" value="PH_domain"/>
</dbReference>
<dbReference type="InterPro" id="IPR051765">
    <property type="entry name" value="PH_domain-containing_F"/>
</dbReference>
<dbReference type="InterPro" id="IPR037871">
    <property type="entry name" value="PH_Phafin"/>
</dbReference>
<dbReference type="InterPro" id="IPR042762">
    <property type="entry name" value="PKHF1_FYVE"/>
</dbReference>
<dbReference type="InterPro" id="IPR000306">
    <property type="entry name" value="Znf_FYVE"/>
</dbReference>
<dbReference type="InterPro" id="IPR017455">
    <property type="entry name" value="Znf_FYVE-rel"/>
</dbReference>
<dbReference type="InterPro" id="IPR011011">
    <property type="entry name" value="Znf_FYVE_PHD"/>
</dbReference>
<dbReference type="InterPro" id="IPR013083">
    <property type="entry name" value="Znf_RING/FYVE/PHD"/>
</dbReference>
<dbReference type="PANTHER" id="PTHR46280:SF2">
    <property type="entry name" value="PLECKSTRIN HOMOLOGY DOMAIN-CONTAINING FAMILY F MEMBER 1"/>
    <property type="match status" value="1"/>
</dbReference>
<dbReference type="PANTHER" id="PTHR46280">
    <property type="entry name" value="PLECKSTRIN HOMOLOGY DOMAIN-CONTAINING FAMILY F MEMBER 2-RELATED"/>
    <property type="match status" value="1"/>
</dbReference>
<dbReference type="Pfam" id="PF01363">
    <property type="entry name" value="FYVE"/>
    <property type="match status" value="1"/>
</dbReference>
<dbReference type="Pfam" id="PF00169">
    <property type="entry name" value="PH"/>
    <property type="match status" value="1"/>
</dbReference>
<dbReference type="SMART" id="SM00064">
    <property type="entry name" value="FYVE"/>
    <property type="match status" value="1"/>
</dbReference>
<dbReference type="SMART" id="SM00233">
    <property type="entry name" value="PH"/>
    <property type="match status" value="1"/>
</dbReference>
<dbReference type="SUPFAM" id="SSF57903">
    <property type="entry name" value="FYVE/PHD zinc finger"/>
    <property type="match status" value="1"/>
</dbReference>
<dbReference type="SUPFAM" id="SSF50729">
    <property type="entry name" value="PH domain-like"/>
    <property type="match status" value="1"/>
</dbReference>
<dbReference type="PROSITE" id="PS50003">
    <property type="entry name" value="PH_DOMAIN"/>
    <property type="match status" value="1"/>
</dbReference>
<dbReference type="PROSITE" id="PS50178">
    <property type="entry name" value="ZF_FYVE"/>
    <property type="match status" value="1"/>
</dbReference>
<organism>
    <name type="scientific">Mus musculus</name>
    <name type="common">Mouse</name>
    <dbReference type="NCBI Taxonomy" id="10090"/>
    <lineage>
        <taxon>Eukaryota</taxon>
        <taxon>Metazoa</taxon>
        <taxon>Chordata</taxon>
        <taxon>Craniata</taxon>
        <taxon>Vertebrata</taxon>
        <taxon>Euteleostomi</taxon>
        <taxon>Mammalia</taxon>
        <taxon>Eutheria</taxon>
        <taxon>Euarchontoglires</taxon>
        <taxon>Glires</taxon>
        <taxon>Rodentia</taxon>
        <taxon>Myomorpha</taxon>
        <taxon>Muroidea</taxon>
        <taxon>Muridae</taxon>
        <taxon>Murinae</taxon>
        <taxon>Mus</taxon>
        <taxon>Mus</taxon>
    </lineage>
</organism>
<feature type="chain" id="PRO_0000251598" description="Pleckstrin homology domain-containing family F member 1">
    <location>
        <begin position="1"/>
        <end position="279"/>
    </location>
</feature>
<feature type="domain" description="PH" evidence="3">
    <location>
        <begin position="35"/>
        <end position="131"/>
    </location>
</feature>
<feature type="zinc finger region" description="FYVE-type" evidence="2">
    <location>
        <begin position="152"/>
        <end position="212"/>
    </location>
</feature>
<feature type="region of interest" description="Disordered" evidence="4">
    <location>
        <begin position="220"/>
        <end position="263"/>
    </location>
</feature>
<feature type="compositionally biased region" description="Acidic residues" evidence="4">
    <location>
        <begin position="244"/>
        <end position="253"/>
    </location>
</feature>
<feature type="binding site" evidence="2">
    <location>
        <position position="158"/>
    </location>
    <ligand>
        <name>Zn(2+)</name>
        <dbReference type="ChEBI" id="CHEBI:29105"/>
        <label>1</label>
    </ligand>
</feature>
<feature type="binding site" evidence="2">
    <location>
        <position position="161"/>
    </location>
    <ligand>
        <name>Zn(2+)</name>
        <dbReference type="ChEBI" id="CHEBI:29105"/>
        <label>1</label>
    </ligand>
</feature>
<feature type="binding site" evidence="2">
    <location>
        <position position="175"/>
    </location>
    <ligand>
        <name>Zn(2+)</name>
        <dbReference type="ChEBI" id="CHEBI:29105"/>
        <label>2</label>
    </ligand>
</feature>
<feature type="binding site" evidence="2">
    <location>
        <position position="178"/>
    </location>
    <ligand>
        <name>Zn(2+)</name>
        <dbReference type="ChEBI" id="CHEBI:29105"/>
        <label>2</label>
    </ligand>
</feature>
<feature type="binding site" evidence="2">
    <location>
        <position position="183"/>
    </location>
    <ligand>
        <name>Zn(2+)</name>
        <dbReference type="ChEBI" id="CHEBI:29105"/>
        <label>1</label>
    </ligand>
</feature>
<feature type="binding site" evidence="2">
    <location>
        <position position="186"/>
    </location>
    <ligand>
        <name>Zn(2+)</name>
        <dbReference type="ChEBI" id="CHEBI:29105"/>
        <label>1</label>
    </ligand>
</feature>
<feature type="binding site" evidence="2">
    <location>
        <position position="204"/>
    </location>
    <ligand>
        <name>Zn(2+)</name>
        <dbReference type="ChEBI" id="CHEBI:29105"/>
        <label>2</label>
    </ligand>
</feature>
<feature type="binding site" evidence="2">
    <location>
        <position position="207"/>
    </location>
    <ligand>
        <name>Zn(2+)</name>
        <dbReference type="ChEBI" id="CHEBI:29105"/>
        <label>2</label>
    </ligand>
</feature>
<feature type="sequence conflict" description="In Ref. 1; BAE34303/BAE41685 and 2; AAH02120." evidence="6" ref="1 2">
    <original>L</original>
    <variation>R</variation>
    <location>
        <position position="216"/>
    </location>
</feature>